<evidence type="ECO:0000255" key="1">
    <source>
        <dbReference type="HAMAP-Rule" id="MF_01356"/>
    </source>
</evidence>
<evidence type="ECO:0000305" key="2"/>
<keyword id="KW-0004">4Fe-4S</keyword>
<keyword id="KW-0408">Iron</keyword>
<keyword id="KW-0411">Iron-sulfur</keyword>
<keyword id="KW-0472">Membrane</keyword>
<keyword id="KW-0479">Metal-binding</keyword>
<keyword id="KW-0520">NAD</keyword>
<keyword id="KW-0521">NADP</keyword>
<keyword id="KW-0614">Plasmid</keyword>
<keyword id="KW-0618">Plastoquinone</keyword>
<keyword id="KW-0874">Quinone</keyword>
<keyword id="KW-1185">Reference proteome</keyword>
<keyword id="KW-0793">Thylakoid</keyword>
<keyword id="KW-1278">Translocase</keyword>
<keyword id="KW-0813">Transport</keyword>
<dbReference type="EC" id="7.1.1.-" evidence="1"/>
<dbReference type="EMBL" id="X17359">
    <property type="protein sequence ID" value="CAA35236.1"/>
    <property type="molecule type" value="Genomic_DNA"/>
</dbReference>
<dbReference type="EMBL" id="AP004312">
    <property type="protein sequence ID" value="BAD02039.1"/>
    <property type="molecule type" value="Genomic_DNA"/>
</dbReference>
<dbReference type="PIR" id="S09199">
    <property type="entry name" value="F2YBG2"/>
</dbReference>
<dbReference type="SMR" id="P17062"/>
<dbReference type="EnsemblBacteria" id="BAD02039">
    <property type="protein sequence ID" value="BAD02039"/>
    <property type="gene ID" value="BAD02039"/>
</dbReference>
<dbReference type="KEGG" id="syn:sll8031"/>
<dbReference type="InParanoid" id="P17062"/>
<dbReference type="PhylomeDB" id="P17062"/>
<dbReference type="Proteomes" id="UP000001425">
    <property type="component" value="Plasmid pSYSG"/>
</dbReference>
<dbReference type="GO" id="GO:0031676">
    <property type="term" value="C:plasma membrane-derived thylakoid membrane"/>
    <property type="evidence" value="ECO:0007669"/>
    <property type="project" value="UniProtKB-SubCell"/>
</dbReference>
<dbReference type="GO" id="GO:0045271">
    <property type="term" value="C:respiratory chain complex I"/>
    <property type="evidence" value="ECO:0000318"/>
    <property type="project" value="GO_Central"/>
</dbReference>
<dbReference type="GO" id="GO:0051539">
    <property type="term" value="F:4 iron, 4 sulfur cluster binding"/>
    <property type="evidence" value="ECO:0007669"/>
    <property type="project" value="UniProtKB-KW"/>
</dbReference>
<dbReference type="GO" id="GO:0005506">
    <property type="term" value="F:iron ion binding"/>
    <property type="evidence" value="ECO:0007669"/>
    <property type="project" value="UniProtKB-UniRule"/>
</dbReference>
<dbReference type="GO" id="GO:0008137">
    <property type="term" value="F:NADH dehydrogenase (ubiquinone) activity"/>
    <property type="evidence" value="ECO:0000318"/>
    <property type="project" value="GO_Central"/>
</dbReference>
<dbReference type="GO" id="GO:0048038">
    <property type="term" value="F:quinone binding"/>
    <property type="evidence" value="ECO:0007669"/>
    <property type="project" value="UniProtKB-KW"/>
</dbReference>
<dbReference type="GO" id="GO:0009060">
    <property type="term" value="P:aerobic respiration"/>
    <property type="evidence" value="ECO:0000318"/>
    <property type="project" value="GO_Central"/>
</dbReference>
<dbReference type="GO" id="GO:0015990">
    <property type="term" value="P:electron transport coupled proton transport"/>
    <property type="evidence" value="ECO:0000318"/>
    <property type="project" value="GO_Central"/>
</dbReference>
<dbReference type="GO" id="GO:0019684">
    <property type="term" value="P:photosynthesis, light reaction"/>
    <property type="evidence" value="ECO:0007669"/>
    <property type="project" value="UniProtKB-UniRule"/>
</dbReference>
<dbReference type="FunFam" id="3.40.50.12280:FF:000002">
    <property type="entry name" value="NADH-quinone oxidoreductase subunit B"/>
    <property type="match status" value="1"/>
</dbReference>
<dbReference type="Gene3D" id="3.40.50.12280">
    <property type="match status" value="1"/>
</dbReference>
<dbReference type="HAMAP" id="MF_01356">
    <property type="entry name" value="NDH1_NuoB"/>
    <property type="match status" value="1"/>
</dbReference>
<dbReference type="InterPro" id="IPR006137">
    <property type="entry name" value="NADH_UbQ_OxRdtase-like_20kDa"/>
</dbReference>
<dbReference type="InterPro" id="IPR006138">
    <property type="entry name" value="NADH_UQ_OxRdtase_20Kd_su"/>
</dbReference>
<dbReference type="NCBIfam" id="TIGR01957">
    <property type="entry name" value="nuoB_fam"/>
    <property type="match status" value="1"/>
</dbReference>
<dbReference type="NCBIfam" id="NF005012">
    <property type="entry name" value="PRK06411.1"/>
    <property type="match status" value="1"/>
</dbReference>
<dbReference type="PANTHER" id="PTHR11995">
    <property type="entry name" value="NADH DEHYDROGENASE"/>
    <property type="match status" value="1"/>
</dbReference>
<dbReference type="PANTHER" id="PTHR11995:SF14">
    <property type="entry name" value="NADH DEHYDROGENASE [UBIQUINONE] IRON-SULFUR PROTEIN 7, MITOCHONDRIAL"/>
    <property type="match status" value="1"/>
</dbReference>
<dbReference type="Pfam" id="PF01058">
    <property type="entry name" value="Oxidored_q6"/>
    <property type="match status" value="1"/>
</dbReference>
<dbReference type="SUPFAM" id="SSF56770">
    <property type="entry name" value="HydA/Nqo6-like"/>
    <property type="match status" value="1"/>
</dbReference>
<dbReference type="PROSITE" id="PS01150">
    <property type="entry name" value="COMPLEX1_20K"/>
    <property type="match status" value="1"/>
</dbReference>
<comment type="function">
    <text evidence="1">NDH-1 shuttles electrons from an unknown electron donor, via FMN and iron-sulfur (Fe-S) centers, to quinones in the respiratory and/or the photosynthetic chain. The immediate electron acceptor for the enzyme in this species is believed to be plastoquinone. Couples the redox reaction to proton translocation, and thus conserves the redox energy in a proton gradient. Cyanobacterial NDH-1 also plays a role in inorganic carbon-concentration.</text>
</comment>
<comment type="catalytic activity">
    <reaction evidence="1">
        <text>a plastoquinone + NADH + (n+1) H(+)(in) = a plastoquinol + NAD(+) + n H(+)(out)</text>
        <dbReference type="Rhea" id="RHEA:42608"/>
        <dbReference type="Rhea" id="RHEA-COMP:9561"/>
        <dbReference type="Rhea" id="RHEA-COMP:9562"/>
        <dbReference type="ChEBI" id="CHEBI:15378"/>
        <dbReference type="ChEBI" id="CHEBI:17757"/>
        <dbReference type="ChEBI" id="CHEBI:57540"/>
        <dbReference type="ChEBI" id="CHEBI:57945"/>
        <dbReference type="ChEBI" id="CHEBI:62192"/>
    </reaction>
</comment>
<comment type="catalytic activity">
    <reaction evidence="1">
        <text>a plastoquinone + NADPH + (n+1) H(+)(in) = a plastoquinol + NADP(+) + n H(+)(out)</text>
        <dbReference type="Rhea" id="RHEA:42612"/>
        <dbReference type="Rhea" id="RHEA-COMP:9561"/>
        <dbReference type="Rhea" id="RHEA-COMP:9562"/>
        <dbReference type="ChEBI" id="CHEBI:15378"/>
        <dbReference type="ChEBI" id="CHEBI:17757"/>
        <dbReference type="ChEBI" id="CHEBI:57783"/>
        <dbReference type="ChEBI" id="CHEBI:58349"/>
        <dbReference type="ChEBI" id="CHEBI:62192"/>
    </reaction>
</comment>
<comment type="cofactor">
    <cofactor evidence="1">
        <name>[4Fe-4S] cluster</name>
        <dbReference type="ChEBI" id="CHEBI:49883"/>
    </cofactor>
    <text evidence="1">Binds 1 [4Fe-4S] cluster.</text>
</comment>
<comment type="subunit">
    <text>NDH-1 can be composed of about 15 different subunits; different subcomplexes with different compositions have been identified which probably have different functions.</text>
</comment>
<comment type="subcellular location">
    <subcellularLocation>
        <location evidence="2">Cellular thylakoid membrane</location>
        <topology evidence="2">Peripheral membrane protein</topology>
        <orientation evidence="2">Cytoplasmic side</orientation>
    </subcellularLocation>
</comment>
<comment type="similarity">
    <text evidence="1">Belongs to the complex I 20 kDa subunit family.</text>
</comment>
<gene>
    <name evidence="1" type="primary">ndhK2</name>
    <name type="synonym">psbG2</name>
    <name type="ordered locus">sll8031</name>
</gene>
<name>NDHK2_SYNY3</name>
<sequence>MSTSTHALTLQNPIQAPQVTKELSENVILTCLDDIYNWARLSTLYPMMFGTACCFMEFMAAFGPRFDLERFGSIPRATPRQADLMITAGTITMKYAPALVQLYEQIPEPKYVIAMGACTITAGMFSADSPTAVRGVDKLIPVDVYIPGCPPRPEAVIDGIIKLRKKVAGESRQDYTEDLQTHRFHAVRHRMKPVSPILTGQYLRHHEDLTPHHDPLLIK</sequence>
<feature type="chain" id="PRO_0000118761" description="NAD(P)H-quinone oxidoreductase subunit K 2">
    <location>
        <begin position="1"/>
        <end position="219"/>
    </location>
</feature>
<feature type="binding site" evidence="1">
    <location>
        <position position="53"/>
    </location>
    <ligand>
        <name>[4Fe-4S] cluster</name>
        <dbReference type="ChEBI" id="CHEBI:49883"/>
    </ligand>
</feature>
<feature type="binding site" evidence="1">
    <location>
        <position position="54"/>
    </location>
    <ligand>
        <name>[4Fe-4S] cluster</name>
        <dbReference type="ChEBI" id="CHEBI:49883"/>
    </ligand>
</feature>
<feature type="binding site" evidence="1">
    <location>
        <position position="118"/>
    </location>
    <ligand>
        <name>[4Fe-4S] cluster</name>
        <dbReference type="ChEBI" id="CHEBI:49883"/>
    </ligand>
</feature>
<feature type="binding site" evidence="1">
    <location>
        <position position="149"/>
    </location>
    <ligand>
        <name>[4Fe-4S] cluster</name>
        <dbReference type="ChEBI" id="CHEBI:49883"/>
    </ligand>
</feature>
<organism>
    <name type="scientific">Synechocystis sp. (strain ATCC 27184 / PCC 6803 / Kazusa)</name>
    <dbReference type="NCBI Taxonomy" id="1111708"/>
    <lineage>
        <taxon>Bacteria</taxon>
        <taxon>Bacillati</taxon>
        <taxon>Cyanobacteriota</taxon>
        <taxon>Cyanophyceae</taxon>
        <taxon>Synechococcales</taxon>
        <taxon>Merismopediaceae</taxon>
        <taxon>Synechocystis</taxon>
    </lineage>
</organism>
<accession>P17062</accession>
<accession>Q6ZE61</accession>
<geneLocation type="plasmid">
    <name>pSYSG</name>
</geneLocation>
<protein>
    <recommendedName>
        <fullName evidence="1">NAD(P)H-quinone oxidoreductase subunit K 2</fullName>
        <ecNumber evidence="1">7.1.1.-</ecNumber>
    </recommendedName>
    <alternativeName>
        <fullName evidence="1">NAD(P)H dehydrogenase I subunit K 2</fullName>
    </alternativeName>
    <alternativeName>
        <fullName evidence="1">NDH-1 subunit K 2</fullName>
        <shortName evidence="1">NDH-K 2</shortName>
    </alternativeName>
</protein>
<proteinExistence type="inferred from homology"/>
<reference key="1">
    <citation type="journal article" date="1990" name="FEBS Lett.">
        <title>Nucleotide sequence of the second psbG gene in Synechocystis 6803. Possible implications for psbG function as a NAD(P)H dehydrogenase subunit gene.</title>
        <authorList>
            <person name="Mayes S.R."/>
            <person name="Cook K.M."/>
            <person name="Barber J."/>
        </authorList>
    </citation>
    <scope>NUCLEOTIDE SEQUENCE [GENOMIC DNA]</scope>
</reference>
<reference key="2">
    <citation type="journal article" date="2003" name="DNA Res.">
        <title>Structural analysis of four large plasmids harboring in a unicellular cyanobacterium, Synechocystis sp. PCC 6803.</title>
        <authorList>
            <person name="Kaneko T."/>
            <person name="Nakamura Y."/>
            <person name="Sasamoto S."/>
            <person name="Watanabe A."/>
            <person name="Kohara M."/>
            <person name="Matsumoto M."/>
            <person name="Shimpo S."/>
            <person name="Yamada M."/>
            <person name="Tabata S."/>
        </authorList>
    </citation>
    <scope>NUCLEOTIDE SEQUENCE [LARGE SCALE GENOMIC DNA]</scope>
    <source>
        <strain>ATCC 27184 / PCC 6803 / Kazusa</strain>
    </source>
</reference>